<dbReference type="EMBL" id="BA000018">
    <property type="protein sequence ID" value="BAB41495.1"/>
    <property type="molecule type" value="Genomic_DNA"/>
</dbReference>
<dbReference type="PIR" id="D89792">
    <property type="entry name" value="D89792"/>
</dbReference>
<dbReference type="RefSeq" id="WP_001240826.1">
    <property type="nucleotide sequence ID" value="NC_002745.2"/>
</dbReference>
<dbReference type="SMR" id="Q7A7S4"/>
<dbReference type="EnsemblBacteria" id="BAB41495">
    <property type="protein sequence ID" value="BAB41495"/>
    <property type="gene ID" value="BAB41495"/>
</dbReference>
<dbReference type="GeneID" id="98344606"/>
<dbReference type="KEGG" id="sau:SA0271"/>
<dbReference type="HOGENOM" id="CLU_158563_4_0_9"/>
<dbReference type="GO" id="GO:0005576">
    <property type="term" value="C:extracellular region"/>
    <property type="evidence" value="ECO:0007669"/>
    <property type="project" value="UniProtKB-SubCell"/>
</dbReference>
<dbReference type="Gene3D" id="1.10.287.1060">
    <property type="entry name" value="ESAT-6-like"/>
    <property type="match status" value="1"/>
</dbReference>
<dbReference type="InterPro" id="IPR036689">
    <property type="entry name" value="ESAT-6-like_sf"/>
</dbReference>
<dbReference type="InterPro" id="IPR010310">
    <property type="entry name" value="T7SS_ESAT-6-like"/>
</dbReference>
<dbReference type="NCBIfam" id="TIGR03930">
    <property type="entry name" value="WXG100_ESAT6"/>
    <property type="match status" value="1"/>
</dbReference>
<dbReference type="Pfam" id="PF06013">
    <property type="entry name" value="WXG100"/>
    <property type="match status" value="1"/>
</dbReference>
<dbReference type="SUPFAM" id="SSF140453">
    <property type="entry name" value="EsxAB dimer-like"/>
    <property type="match status" value="1"/>
</dbReference>
<gene>
    <name evidence="2" type="primary">esxA</name>
    <name type="ordered locus">SA0271</name>
</gene>
<comment type="function">
    <text evidence="1 2">Virulence factor that is important for the establishment of infection in the host. EsxA is required for EsxB synthesis as well as secretion (By similarity). Modulates host cell apoptotic pathways and mediates together with EsxB the release of S.aureus from the host cell. By acting on apoptosis, plays a role in the modulation of dendritic cell-mediated immunity (By similarity).</text>
</comment>
<comment type="subcellular location">
    <subcellularLocation>
        <location evidence="2">Secreted</location>
    </subcellularLocation>
    <text evidence="2">Secreted via the ESAT-6 secretion system (Ess) / type VII secretion system (T7SS).</text>
</comment>
<comment type="similarity">
    <text evidence="4">Belongs to the WXG100 family. sagEsxA-like subfamily.</text>
</comment>
<name>ESXA_STAAN</name>
<keyword id="KW-0175">Coiled coil</keyword>
<keyword id="KW-0964">Secreted</keyword>
<keyword id="KW-0843">Virulence</keyword>
<organism>
    <name type="scientific">Staphylococcus aureus (strain N315)</name>
    <dbReference type="NCBI Taxonomy" id="158879"/>
    <lineage>
        <taxon>Bacteria</taxon>
        <taxon>Bacillati</taxon>
        <taxon>Bacillota</taxon>
        <taxon>Bacilli</taxon>
        <taxon>Bacillales</taxon>
        <taxon>Staphylococcaceae</taxon>
        <taxon>Staphylococcus</taxon>
    </lineage>
</organism>
<evidence type="ECO:0000250" key="1">
    <source>
        <dbReference type="UniProtKB" id="A0A0H2XI99"/>
    </source>
</evidence>
<evidence type="ECO:0000250" key="2">
    <source>
        <dbReference type="UniProtKB" id="P0C046"/>
    </source>
</evidence>
<evidence type="ECO:0000255" key="3"/>
<evidence type="ECO:0000305" key="4"/>
<feature type="chain" id="PRO_0000167825" description="Type VII secretion system extracellular protein A">
    <location>
        <begin position="1"/>
        <end position="97"/>
    </location>
</feature>
<feature type="coiled-coil region" evidence="3">
    <location>
        <begin position="61"/>
        <end position="93"/>
    </location>
</feature>
<reference key="1">
    <citation type="journal article" date="2001" name="Lancet">
        <title>Whole genome sequencing of meticillin-resistant Staphylococcus aureus.</title>
        <authorList>
            <person name="Kuroda M."/>
            <person name="Ohta T."/>
            <person name="Uchiyama I."/>
            <person name="Baba T."/>
            <person name="Yuzawa H."/>
            <person name="Kobayashi I."/>
            <person name="Cui L."/>
            <person name="Oguchi A."/>
            <person name="Aoki K."/>
            <person name="Nagai Y."/>
            <person name="Lian J.-Q."/>
            <person name="Ito T."/>
            <person name="Kanamori M."/>
            <person name="Matsumaru H."/>
            <person name="Maruyama A."/>
            <person name="Murakami H."/>
            <person name="Hosoyama A."/>
            <person name="Mizutani-Ui Y."/>
            <person name="Takahashi N.K."/>
            <person name="Sawano T."/>
            <person name="Inoue R."/>
            <person name="Kaito C."/>
            <person name="Sekimizu K."/>
            <person name="Hirakawa H."/>
            <person name="Kuhara S."/>
            <person name="Goto S."/>
            <person name="Yabuzaki J."/>
            <person name="Kanehisa M."/>
            <person name="Yamashita A."/>
            <person name="Oshima K."/>
            <person name="Furuya K."/>
            <person name="Yoshino C."/>
            <person name="Shiba T."/>
            <person name="Hattori M."/>
            <person name="Ogasawara N."/>
            <person name="Hayashi H."/>
            <person name="Hiramatsu K."/>
        </authorList>
    </citation>
    <scope>NUCLEOTIDE SEQUENCE [LARGE SCALE GENOMIC DNA]</scope>
    <source>
        <strain>N315</strain>
    </source>
</reference>
<reference key="2">
    <citation type="submission" date="2007-10" db="UniProtKB">
        <title>Shotgun proteomic analysis of total and membrane protein extracts of S. aureus strain N315.</title>
        <authorList>
            <person name="Vaezzadeh A.R."/>
            <person name="Deshusses J."/>
            <person name="Lescuyer P."/>
            <person name="Hochstrasser D.F."/>
        </authorList>
    </citation>
    <scope>IDENTIFICATION BY MASS SPECTROMETRY [LARGE SCALE ANALYSIS]</scope>
    <source>
        <strain>N315</strain>
    </source>
</reference>
<accession>Q7A7S4</accession>
<protein>
    <recommendedName>
        <fullName evidence="2">Type VII secretion system extracellular protein A</fullName>
        <shortName evidence="2">Ess extracellular protein A</shortName>
    </recommendedName>
</protein>
<proteinExistence type="evidence at protein level"/>
<sequence>MAMIKMSPEEIRAKSQSYGQGSDQIRQILSDLTRAQGEIAANWEGQAFSRFEEQFQQLSPKVEKFAQLLEEIKQQLNSTADAVQEQDQQLSNNFGLQ</sequence>